<dbReference type="EMBL" id="CP000548">
    <property type="protein sequence ID" value="ABO04652.1"/>
    <property type="molecule type" value="Genomic_DNA"/>
</dbReference>
<dbReference type="RefSeq" id="WP_004194372.1">
    <property type="nucleotide sequence ID" value="NZ_CP007802.1"/>
</dbReference>
<dbReference type="SMR" id="A3MP59"/>
<dbReference type="GeneID" id="92980034"/>
<dbReference type="KEGG" id="bmaz:BM44_784"/>
<dbReference type="KEGG" id="bmn:BMA10247_2519"/>
<dbReference type="PATRIC" id="fig|320389.8.peg.871"/>
<dbReference type="GO" id="GO:0022625">
    <property type="term" value="C:cytosolic large ribosomal subunit"/>
    <property type="evidence" value="ECO:0007669"/>
    <property type="project" value="TreeGrafter"/>
</dbReference>
<dbReference type="GO" id="GO:0003729">
    <property type="term" value="F:mRNA binding"/>
    <property type="evidence" value="ECO:0007669"/>
    <property type="project" value="TreeGrafter"/>
</dbReference>
<dbReference type="GO" id="GO:0003735">
    <property type="term" value="F:structural constituent of ribosome"/>
    <property type="evidence" value="ECO:0007669"/>
    <property type="project" value="InterPro"/>
</dbReference>
<dbReference type="GO" id="GO:0017148">
    <property type="term" value="P:negative regulation of translation"/>
    <property type="evidence" value="ECO:0007669"/>
    <property type="project" value="TreeGrafter"/>
</dbReference>
<dbReference type="GO" id="GO:0006412">
    <property type="term" value="P:translation"/>
    <property type="evidence" value="ECO:0007669"/>
    <property type="project" value="UniProtKB-UniRule"/>
</dbReference>
<dbReference type="CDD" id="cd00392">
    <property type="entry name" value="Ribosomal_L13"/>
    <property type="match status" value="1"/>
</dbReference>
<dbReference type="FunFam" id="3.90.1180.10:FF:000001">
    <property type="entry name" value="50S ribosomal protein L13"/>
    <property type="match status" value="1"/>
</dbReference>
<dbReference type="Gene3D" id="3.90.1180.10">
    <property type="entry name" value="Ribosomal protein L13"/>
    <property type="match status" value="1"/>
</dbReference>
<dbReference type="HAMAP" id="MF_01366">
    <property type="entry name" value="Ribosomal_uL13"/>
    <property type="match status" value="1"/>
</dbReference>
<dbReference type="InterPro" id="IPR005822">
    <property type="entry name" value="Ribosomal_uL13"/>
</dbReference>
<dbReference type="InterPro" id="IPR005823">
    <property type="entry name" value="Ribosomal_uL13_bac-type"/>
</dbReference>
<dbReference type="InterPro" id="IPR036899">
    <property type="entry name" value="Ribosomal_uL13_sf"/>
</dbReference>
<dbReference type="NCBIfam" id="TIGR01066">
    <property type="entry name" value="rplM_bact"/>
    <property type="match status" value="1"/>
</dbReference>
<dbReference type="PANTHER" id="PTHR11545:SF2">
    <property type="entry name" value="LARGE RIBOSOMAL SUBUNIT PROTEIN UL13M"/>
    <property type="match status" value="1"/>
</dbReference>
<dbReference type="PANTHER" id="PTHR11545">
    <property type="entry name" value="RIBOSOMAL PROTEIN L13"/>
    <property type="match status" value="1"/>
</dbReference>
<dbReference type="Pfam" id="PF00572">
    <property type="entry name" value="Ribosomal_L13"/>
    <property type="match status" value="1"/>
</dbReference>
<dbReference type="PIRSF" id="PIRSF002181">
    <property type="entry name" value="Ribosomal_L13"/>
    <property type="match status" value="1"/>
</dbReference>
<dbReference type="SUPFAM" id="SSF52161">
    <property type="entry name" value="Ribosomal protein L13"/>
    <property type="match status" value="1"/>
</dbReference>
<sequence length="142" mass="16017">MKTFSAKAHEVTREWYVIDATDKVLGRVASEVARRLRGKHKPEFTPHVDTGDFIIVINASKLKVTGNKTLDKKYYRHSGYPGGIYETTFGKMQERFPGRALEKAVKGMLPKCPLGYAMIKKLKVYAEATHPHSAQQPKALEI</sequence>
<protein>
    <recommendedName>
        <fullName evidence="1">Large ribosomal subunit protein uL13</fullName>
    </recommendedName>
    <alternativeName>
        <fullName evidence="2">50S ribosomal protein L13</fullName>
    </alternativeName>
</protein>
<comment type="function">
    <text evidence="1">This protein is one of the early assembly proteins of the 50S ribosomal subunit, although it is not seen to bind rRNA by itself. It is important during the early stages of 50S assembly.</text>
</comment>
<comment type="subunit">
    <text evidence="1">Part of the 50S ribosomal subunit.</text>
</comment>
<comment type="similarity">
    <text evidence="1">Belongs to the universal ribosomal protein uL13 family.</text>
</comment>
<keyword id="KW-0687">Ribonucleoprotein</keyword>
<keyword id="KW-0689">Ribosomal protein</keyword>
<organism>
    <name type="scientific">Burkholderia mallei (strain NCTC 10247)</name>
    <dbReference type="NCBI Taxonomy" id="320389"/>
    <lineage>
        <taxon>Bacteria</taxon>
        <taxon>Pseudomonadati</taxon>
        <taxon>Pseudomonadota</taxon>
        <taxon>Betaproteobacteria</taxon>
        <taxon>Burkholderiales</taxon>
        <taxon>Burkholderiaceae</taxon>
        <taxon>Burkholderia</taxon>
        <taxon>pseudomallei group</taxon>
    </lineage>
</organism>
<reference key="1">
    <citation type="journal article" date="2010" name="Genome Biol. Evol.">
        <title>Continuing evolution of Burkholderia mallei through genome reduction and large-scale rearrangements.</title>
        <authorList>
            <person name="Losada L."/>
            <person name="Ronning C.M."/>
            <person name="DeShazer D."/>
            <person name="Woods D."/>
            <person name="Fedorova N."/>
            <person name="Kim H.S."/>
            <person name="Shabalina S.A."/>
            <person name="Pearson T.R."/>
            <person name="Brinkac L."/>
            <person name="Tan P."/>
            <person name="Nandi T."/>
            <person name="Crabtree J."/>
            <person name="Badger J."/>
            <person name="Beckstrom-Sternberg S."/>
            <person name="Saqib M."/>
            <person name="Schutzer S.E."/>
            <person name="Keim P."/>
            <person name="Nierman W.C."/>
        </authorList>
    </citation>
    <scope>NUCLEOTIDE SEQUENCE [LARGE SCALE GENOMIC DNA]</scope>
    <source>
        <strain>NCTC 10247</strain>
    </source>
</reference>
<feature type="chain" id="PRO_1000055355" description="Large ribosomal subunit protein uL13">
    <location>
        <begin position="1"/>
        <end position="142"/>
    </location>
</feature>
<name>RL13_BURM7</name>
<accession>A3MP59</accession>
<proteinExistence type="inferred from homology"/>
<gene>
    <name evidence="1" type="primary">rplM</name>
    <name type="ordered locus">BMA10247_2519</name>
</gene>
<evidence type="ECO:0000255" key="1">
    <source>
        <dbReference type="HAMAP-Rule" id="MF_01366"/>
    </source>
</evidence>
<evidence type="ECO:0000305" key="2"/>